<evidence type="ECO:0000250" key="1">
    <source>
        <dbReference type="UniProtKB" id="P26572"/>
    </source>
</evidence>
<evidence type="ECO:0000250" key="2">
    <source>
        <dbReference type="UniProtKB" id="P27808"/>
    </source>
</evidence>
<evidence type="ECO:0000255" key="3"/>
<evidence type="ECO:0000269" key="4">
    <source>
    </source>
</evidence>
<evidence type="ECO:0000269" key="5">
    <source>
    </source>
</evidence>
<evidence type="ECO:0000269" key="6">
    <source>
    </source>
</evidence>
<evidence type="ECO:0000305" key="7"/>
<evidence type="ECO:0007744" key="8">
    <source>
        <dbReference type="PDB" id="1FO8"/>
    </source>
</evidence>
<evidence type="ECO:0007744" key="9">
    <source>
        <dbReference type="PDB" id="1FO9"/>
    </source>
</evidence>
<evidence type="ECO:0007744" key="10">
    <source>
        <dbReference type="PDB" id="1FOA"/>
    </source>
</evidence>
<evidence type="ECO:0007744" key="11">
    <source>
        <dbReference type="PDB" id="2AM3"/>
    </source>
</evidence>
<evidence type="ECO:0007744" key="12">
    <source>
        <dbReference type="PDB" id="2AM4"/>
    </source>
</evidence>
<evidence type="ECO:0007744" key="13">
    <source>
        <dbReference type="PDB" id="2AM5"/>
    </source>
</evidence>
<evidence type="ECO:0007744" key="14">
    <source>
        <dbReference type="PDB" id="2APC"/>
    </source>
</evidence>
<evidence type="ECO:0007829" key="15">
    <source>
        <dbReference type="PDB" id="1FO8"/>
    </source>
</evidence>
<evidence type="ECO:0007829" key="16">
    <source>
        <dbReference type="PDB" id="2APC"/>
    </source>
</evidence>
<gene>
    <name type="primary">MGAT1</name>
    <name type="synonym">GNT1</name>
</gene>
<dbReference type="EC" id="2.4.1.101" evidence="6"/>
<dbReference type="EMBL" id="M57301">
    <property type="protein sequence ID" value="AAA31493.1"/>
    <property type="molecule type" value="mRNA"/>
</dbReference>
<dbReference type="PIR" id="A38561">
    <property type="entry name" value="A38561"/>
</dbReference>
<dbReference type="RefSeq" id="NP_001076214.1">
    <property type="nucleotide sequence ID" value="NM_001082745.1"/>
</dbReference>
<dbReference type="PDB" id="1FO8">
    <property type="method" value="X-ray"/>
    <property type="resolution" value="1.40 A"/>
    <property type="chains" value="A=106-447"/>
</dbReference>
<dbReference type="PDB" id="1FO9">
    <property type="method" value="X-ray"/>
    <property type="resolution" value="1.50 A"/>
    <property type="chains" value="A=106-447"/>
</dbReference>
<dbReference type="PDB" id="1FOA">
    <property type="method" value="X-ray"/>
    <property type="resolution" value="1.80 A"/>
    <property type="chains" value="A=106-447"/>
</dbReference>
<dbReference type="PDB" id="2AM3">
    <property type="method" value="X-ray"/>
    <property type="resolution" value="1.80 A"/>
    <property type="chains" value="A=106-447"/>
</dbReference>
<dbReference type="PDB" id="2AM4">
    <property type="method" value="X-ray"/>
    <property type="resolution" value="1.70 A"/>
    <property type="chains" value="A=106-447"/>
</dbReference>
<dbReference type="PDB" id="2AM5">
    <property type="method" value="X-ray"/>
    <property type="resolution" value="1.60 A"/>
    <property type="chains" value="A=106-447"/>
</dbReference>
<dbReference type="PDB" id="2APC">
    <property type="method" value="X-ray"/>
    <property type="resolution" value="1.50 A"/>
    <property type="chains" value="A=106-447"/>
</dbReference>
<dbReference type="PDBsum" id="1FO8"/>
<dbReference type="PDBsum" id="1FO9"/>
<dbReference type="PDBsum" id="1FOA"/>
<dbReference type="PDBsum" id="2AM3"/>
<dbReference type="PDBsum" id="2AM4"/>
<dbReference type="PDBsum" id="2AM5"/>
<dbReference type="PDBsum" id="2APC"/>
<dbReference type="SMR" id="P27115"/>
<dbReference type="FunCoup" id="P27115">
    <property type="interactions" value="809"/>
</dbReference>
<dbReference type="STRING" id="9986.ENSOCUP00000037416"/>
<dbReference type="CAZy" id="GT13">
    <property type="family name" value="Glycosyltransferase Family 13"/>
</dbReference>
<dbReference type="Ensembl" id="ENSOCUT00000006540.3">
    <property type="protein sequence ID" value="ENSOCUP00000037416.1"/>
    <property type="gene ID" value="ENSOCUG00000006544.3"/>
</dbReference>
<dbReference type="GeneID" id="100009521"/>
<dbReference type="KEGG" id="ocu:100009521"/>
<dbReference type="CTD" id="4245"/>
<dbReference type="GeneTree" id="ENSGT00530000063632"/>
<dbReference type="InParanoid" id="P27115"/>
<dbReference type="OrthoDB" id="440755at2759"/>
<dbReference type="BRENDA" id="2.4.1.101">
    <property type="organism ID" value="1749"/>
</dbReference>
<dbReference type="SABIO-RK" id="P27115"/>
<dbReference type="UniPathway" id="UPA00378"/>
<dbReference type="EvolutionaryTrace" id="P27115"/>
<dbReference type="Proteomes" id="UP000001811">
    <property type="component" value="Chromosome 11"/>
</dbReference>
<dbReference type="Bgee" id="ENSOCUG00000006544">
    <property type="expression patterns" value="Expressed in left lung and 15 other cell types or tissues"/>
</dbReference>
<dbReference type="GO" id="GO:0005797">
    <property type="term" value="C:Golgi medial cisterna"/>
    <property type="evidence" value="ECO:0000314"/>
    <property type="project" value="UniProtKB"/>
</dbReference>
<dbReference type="GO" id="GO:0000139">
    <property type="term" value="C:Golgi membrane"/>
    <property type="evidence" value="ECO:0000250"/>
    <property type="project" value="UniProtKB"/>
</dbReference>
<dbReference type="GO" id="GO:0048471">
    <property type="term" value="C:perinuclear region of cytoplasm"/>
    <property type="evidence" value="ECO:0007669"/>
    <property type="project" value="UniProtKB-SubCell"/>
</dbReference>
<dbReference type="GO" id="GO:0003827">
    <property type="term" value="F:alpha-1,3-mannosylglycoprotein 2-beta-N-acetylglucosaminyltransferase activity"/>
    <property type="evidence" value="ECO:0000250"/>
    <property type="project" value="UniProtKB"/>
</dbReference>
<dbReference type="GO" id="GO:0030145">
    <property type="term" value="F:manganese ion binding"/>
    <property type="evidence" value="ECO:0000250"/>
    <property type="project" value="UniProtKB"/>
</dbReference>
<dbReference type="GO" id="GO:0016262">
    <property type="term" value="F:protein N-acetylglucosaminyltransferase activity"/>
    <property type="evidence" value="ECO:0000314"/>
    <property type="project" value="UniProtKB"/>
</dbReference>
<dbReference type="GO" id="GO:0001701">
    <property type="term" value="P:in utero embryonic development"/>
    <property type="evidence" value="ECO:0007669"/>
    <property type="project" value="Ensembl"/>
</dbReference>
<dbReference type="GO" id="GO:0006013">
    <property type="term" value="P:mannose metabolic process"/>
    <property type="evidence" value="ECO:0000314"/>
    <property type="project" value="UniProtKB"/>
</dbReference>
<dbReference type="GO" id="GO:0006487">
    <property type="term" value="P:protein N-linked glycosylation"/>
    <property type="evidence" value="ECO:0000314"/>
    <property type="project" value="UniProtKB"/>
</dbReference>
<dbReference type="GO" id="GO:0018279">
    <property type="term" value="P:protein N-linked glycosylation via asparagine"/>
    <property type="evidence" value="ECO:0000250"/>
    <property type="project" value="UniProtKB"/>
</dbReference>
<dbReference type="GO" id="GO:0006049">
    <property type="term" value="P:UDP-N-acetylglucosamine catabolic process"/>
    <property type="evidence" value="ECO:0007669"/>
    <property type="project" value="Ensembl"/>
</dbReference>
<dbReference type="CDD" id="cd02514">
    <property type="entry name" value="GT13_GLCNAC-TI"/>
    <property type="match status" value="1"/>
</dbReference>
<dbReference type="FunFam" id="3.90.550.10:FF:000055">
    <property type="entry name" value="Alpha-1,3-mannosyl-glycoprotein 2-beta-N-acetylglucosaminyltransferase"/>
    <property type="match status" value="1"/>
</dbReference>
<dbReference type="FunFam" id="3.10.180.20:FF:000001">
    <property type="entry name" value="alpha-1,3-mannosyl-glycoprotein 2-beta-N-acetylglucosaminyltransferase"/>
    <property type="match status" value="1"/>
</dbReference>
<dbReference type="Gene3D" id="3.10.180.20">
    <property type="entry name" value="N-Acetylglucosaminyltransferase I, Domain 2"/>
    <property type="match status" value="1"/>
</dbReference>
<dbReference type="Gene3D" id="3.90.550.10">
    <property type="entry name" value="Spore Coat Polysaccharide Biosynthesis Protein SpsA, Chain A"/>
    <property type="match status" value="1"/>
</dbReference>
<dbReference type="InterPro" id="IPR004139">
    <property type="entry name" value="Glyco_trans_13"/>
</dbReference>
<dbReference type="InterPro" id="IPR052261">
    <property type="entry name" value="Glycosyltransferase_13"/>
</dbReference>
<dbReference type="InterPro" id="IPR029044">
    <property type="entry name" value="Nucleotide-diphossugar_trans"/>
</dbReference>
<dbReference type="PANTHER" id="PTHR10468:SF0">
    <property type="entry name" value="ALPHA-1,3-MANNOSYL-GLYCOPROTEIN 2-BETA-N-ACETYLGLUCOSAMINYLTRANSFERASE"/>
    <property type="match status" value="1"/>
</dbReference>
<dbReference type="PANTHER" id="PTHR10468">
    <property type="entry name" value="PROTEIN O-LINKED-MANNOSE BETA-1,2-N-ACETYLGLUCOSAMINYLTRANSFERASE 1/ALPHA-1,3-MANNOSYL-GLYCOPROTEIN 2-BETA-N-ACETYLGLUCOSAMINYLTRANSFERASE"/>
    <property type="match status" value="1"/>
</dbReference>
<dbReference type="Pfam" id="PF03071">
    <property type="entry name" value="GNT-I"/>
    <property type="match status" value="1"/>
</dbReference>
<dbReference type="SUPFAM" id="SSF53448">
    <property type="entry name" value="Nucleotide-diphospho-sugar transferases"/>
    <property type="match status" value="1"/>
</dbReference>
<name>MGAT1_RABIT</name>
<organism>
    <name type="scientific">Oryctolagus cuniculus</name>
    <name type="common">Rabbit</name>
    <dbReference type="NCBI Taxonomy" id="9986"/>
    <lineage>
        <taxon>Eukaryota</taxon>
        <taxon>Metazoa</taxon>
        <taxon>Chordata</taxon>
        <taxon>Craniata</taxon>
        <taxon>Vertebrata</taxon>
        <taxon>Euteleostomi</taxon>
        <taxon>Mammalia</taxon>
        <taxon>Eutheria</taxon>
        <taxon>Euarchontoglires</taxon>
        <taxon>Glires</taxon>
        <taxon>Lagomorpha</taxon>
        <taxon>Leporidae</taxon>
        <taxon>Oryctolagus</taxon>
    </lineage>
</organism>
<reference key="1">
    <citation type="journal article" date="1991" name="Proc. Natl. Acad. Sci. U.S.A.">
        <title>Molecular cloning and expression of cDNA encoding the enzyme that controls conversion of high-mannose to hybrid and complex N-glycans: UDP-N-acetylglucosamine: alpha-3-D-mannoside beta-1,2-N-acetylglucosaminyltransferase I.</title>
        <authorList>
            <person name="Sarkar M."/>
            <person name="Hull E."/>
            <person name="Nishikawa Y."/>
            <person name="Simpson R.J."/>
            <person name="Moritz R.L."/>
            <person name="Dunn R."/>
            <person name="Schachter H."/>
        </authorList>
    </citation>
    <scope>NUCLEOTIDE SEQUENCE [MRNA]</scope>
    <scope>PARTIAL PROTEIN SEQUENCE</scope>
    <scope>FUNCTION</scope>
    <scope>CATALYTIC ACTIVITY</scope>
    <scope>PATHWAY</scope>
</reference>
<reference key="2">
    <citation type="journal article" date="2000" name="EMBO J.">
        <title>X-ray crystal structure of rabbit N-acetylglucosaminyltransferase I: catalytic mechanism and a new protein superfamily.</title>
        <authorList>
            <person name="Unligil U.M."/>
            <person name="Zhou S."/>
            <person name="Yuwaraj S."/>
            <person name="Sarkar M."/>
            <person name="Schachter H."/>
            <person name="Rini J.M."/>
        </authorList>
    </citation>
    <scope>X-RAY CRYSTALLOGRAPHY (1.4 ANGSTROMS) OF 106-447 ALONE AND IN COMPLEX WITH UDP-GLCNAC</scope>
    <scope>ACTIVE SITE</scope>
    <scope>COFACTOR</scope>
    <scope>MANGANESE-BINDING SITE</scope>
    <scope>SUBSTRATE-BINDING SITES</scope>
    <scope>DISULFIDE BONDS</scope>
</reference>
<reference key="3">
    <citation type="journal article" date="2006" name="J. Mol. Biol.">
        <title>X-ray crystal structures of rabbit N-acetylglucosaminyltransferase I (GnT I) in complex with donor substrate analogues.</title>
        <authorList>
            <person name="Gordon R.D."/>
            <person name="Sivarajah P."/>
            <person name="Satkunarajah M."/>
            <person name="Ma D."/>
            <person name="Tarling C.A."/>
            <person name="Vizitiu D."/>
            <person name="Withers S.G."/>
            <person name="Rini J.M."/>
        </authorList>
    </citation>
    <scope>X-RAY CRYSTALLOGRAPHY (1.6 ANGSTROMS) OF 106-447 IN COMPLEX WITH SUBSTRATE ANALOGS</scope>
    <scope>MANGANESE-BINDING SITE</scope>
    <scope>DISULFIDE BONDS</scope>
</reference>
<protein>
    <recommendedName>
        <fullName>Alpha-1,3-mannosyl-glycoprotein 2-beta-N-acetylglucosaminyltransferase</fullName>
        <ecNumber evidence="6">2.4.1.101</ecNumber>
    </recommendedName>
    <alternativeName>
        <fullName>N-glycosyl-oligosaccharide-glycoprotein N-acetylglucosaminyltransferase I</fullName>
        <shortName>GNT-I</shortName>
        <shortName>GlcNAc-T I</shortName>
    </alternativeName>
</protein>
<accession>P27115</accession>
<proteinExistence type="evidence at protein level"/>
<comment type="function">
    <text evidence="6">Initiates complex N-linked carbohydrate formation. Essential for the conversion of high-mannose to hybrid and complex N-glycans.</text>
</comment>
<comment type="catalytic activity">
    <reaction evidence="6">
        <text>N(4)-(alpha-D-Man-(1-&gt;3)-[alpha-D-Man-(1-&gt;3)-[alpha-D-Man-(1-&gt;6)]-alpha-D-Man-(1-&gt;6)]-beta-D-Man-(1-&gt;4)-beta-D-GlcNAc-(1-&gt;4)-beta-D-GlcNAc)-L-asparaginyl-[protein] (N-glucan mannose isomer 5A1,2) + UDP-N-acetyl-alpha-D-glucosamine = N(4)-{beta-D-GlcNAc-(1-&gt;2)-alpha-D-Man-(1-&gt;3)-[alpha-D-Man-(1-&gt;3)-[alpha-D-Man-(1-&gt;6)]-alpha-D-Man-(1-&gt;6)]-beta-D-Man-(1-&gt;4)-beta-D-GlcNAc-(1-&gt;4)-beta-D-GlcNAc}-L-asparaginyl-[protein] + UDP + H(+)</text>
        <dbReference type="Rhea" id="RHEA:11456"/>
        <dbReference type="Rhea" id="RHEA-COMP:14367"/>
        <dbReference type="Rhea" id="RHEA-COMP:14368"/>
        <dbReference type="ChEBI" id="CHEBI:15378"/>
        <dbReference type="ChEBI" id="CHEBI:57705"/>
        <dbReference type="ChEBI" id="CHEBI:58223"/>
        <dbReference type="ChEBI" id="CHEBI:59087"/>
        <dbReference type="ChEBI" id="CHEBI:60625"/>
        <dbReference type="EC" id="2.4.1.101"/>
    </reaction>
</comment>
<comment type="cofactor">
    <cofactor evidence="4">
        <name>Mn(2+)</name>
        <dbReference type="ChEBI" id="CHEBI:29035"/>
    </cofactor>
    <text evidence="4">The cofactor is mostly bound to the substrate.</text>
</comment>
<comment type="pathway">
    <text evidence="6">Protein modification; protein glycosylation.</text>
</comment>
<comment type="subunit">
    <text evidence="1 2">Interacts with MGAT4D. Interacts with BRI3 (By similarity).</text>
</comment>
<comment type="subcellular location">
    <subcellularLocation>
        <location evidence="1">Golgi apparatus membrane</location>
        <topology evidence="1">Single-pass type II membrane protein</topology>
    </subcellularLocation>
    <subcellularLocation>
        <location evidence="1">Cytoplasm</location>
        <location evidence="1">Perinuclear region</location>
    </subcellularLocation>
    <text evidence="1">Co-localizes with BRI3 at the perinuclear region.</text>
</comment>
<comment type="similarity">
    <text evidence="7">Belongs to the glycosyltransferase 13 family.</text>
</comment>
<feature type="chain" id="PRO_0000191387" description="Alpha-1,3-mannosyl-glycoprotein 2-beta-N-acetylglucosaminyltransferase">
    <location>
        <begin position="1"/>
        <end position="447"/>
    </location>
</feature>
<feature type="topological domain" description="Cytoplasmic" evidence="3">
    <location>
        <begin position="1"/>
        <end position="6"/>
    </location>
</feature>
<feature type="transmembrane region" description="Helical; Signal-anchor for type II membrane protein" evidence="3">
    <location>
        <begin position="7"/>
        <end position="29"/>
    </location>
</feature>
<feature type="topological domain" description="Lumenal" evidence="3">
    <location>
        <begin position="30"/>
        <end position="447"/>
    </location>
</feature>
<feature type="active site" description="Proton acceptor" evidence="3">
    <location>
        <position position="291"/>
    </location>
</feature>
<feature type="binding site" evidence="4 5 10 11 12 13 14">
    <location>
        <position position="117"/>
    </location>
    <ligand>
        <name>substrate</name>
    </ligand>
</feature>
<feature type="binding site" evidence="4 5 10 11 12 13 14">
    <location>
        <position position="144"/>
    </location>
    <ligand>
        <name>substrate</name>
    </ligand>
</feature>
<feature type="binding site" evidence="4 5 10 11 12 13 14">
    <location>
        <position position="190"/>
    </location>
    <ligand>
        <name>substrate</name>
    </ligand>
</feature>
<feature type="binding site" evidence="4 5 10 11 12 13 14">
    <location>
        <position position="212"/>
    </location>
    <ligand>
        <name>substrate</name>
    </ligand>
</feature>
<feature type="binding site" evidence="4 10">
    <location>
        <position position="213"/>
    </location>
    <ligand>
        <name>Mn(2+)</name>
        <dbReference type="ChEBI" id="CHEBI:29035"/>
    </ligand>
</feature>
<feature type="binding site" evidence="4 5 10 11 12 13">
    <location>
        <position position="322"/>
    </location>
    <ligand>
        <name>substrate</name>
    </ligand>
</feature>
<feature type="disulfide bond" evidence="4 5 8 9 10 11 12 13 14">
    <location>
        <begin position="115"/>
        <end position="145"/>
    </location>
</feature>
<feature type="disulfide bond" evidence="4 5 8 9 10 11 12 13 14">
    <location>
        <begin position="239"/>
        <end position="305"/>
    </location>
</feature>
<feature type="strand" evidence="15">
    <location>
        <begin position="110"/>
        <end position="116"/>
    </location>
</feature>
<feature type="helix" evidence="15">
    <location>
        <begin position="120"/>
        <end position="130"/>
    </location>
</feature>
<feature type="turn" evidence="15">
    <location>
        <begin position="134"/>
        <end position="136"/>
    </location>
</feature>
<feature type="strand" evidence="15">
    <location>
        <begin position="139"/>
        <end position="143"/>
    </location>
</feature>
<feature type="helix" evidence="15">
    <location>
        <begin position="148"/>
        <end position="155"/>
    </location>
</feature>
<feature type="helix" evidence="15">
    <location>
        <begin position="156"/>
        <end position="160"/>
    </location>
</feature>
<feature type="strand" evidence="15">
    <location>
        <begin position="161"/>
        <end position="165"/>
    </location>
</feature>
<feature type="helix" evidence="15">
    <location>
        <begin position="179"/>
        <end position="181"/>
    </location>
</feature>
<feature type="helix" evidence="15">
    <location>
        <begin position="182"/>
        <end position="199"/>
    </location>
</feature>
<feature type="strand" evidence="15">
    <location>
        <begin position="205"/>
        <end position="211"/>
    </location>
</feature>
<feature type="strand" evidence="15">
    <location>
        <begin position="214"/>
        <end position="216"/>
    </location>
</feature>
<feature type="helix" evidence="15">
    <location>
        <begin position="220"/>
        <end position="233"/>
    </location>
</feature>
<feature type="strand" evidence="15">
    <location>
        <begin position="237"/>
        <end position="242"/>
    </location>
</feature>
<feature type="helix" evidence="15">
    <location>
        <begin position="249"/>
        <end position="251"/>
    </location>
</feature>
<feature type="strand" evidence="15">
    <location>
        <begin position="260"/>
        <end position="265"/>
    </location>
</feature>
<feature type="strand" evidence="15">
    <location>
        <begin position="269"/>
        <end position="274"/>
    </location>
</feature>
<feature type="helix" evidence="15">
    <location>
        <begin position="275"/>
        <end position="281"/>
    </location>
</feature>
<feature type="helix" evidence="15">
    <location>
        <begin position="282"/>
        <end position="284"/>
    </location>
</feature>
<feature type="helix" evidence="15">
    <location>
        <begin position="290"/>
        <end position="294"/>
    </location>
</feature>
<feature type="helix" evidence="15">
    <location>
        <begin position="297"/>
        <end position="300"/>
    </location>
</feature>
<feature type="strand" evidence="15">
    <location>
        <begin position="304"/>
        <end position="315"/>
    </location>
</feature>
<feature type="strand" evidence="16">
    <location>
        <begin position="318"/>
        <end position="322"/>
    </location>
</feature>
<feature type="helix" evidence="16">
    <location>
        <begin position="325"/>
        <end position="329"/>
    </location>
</feature>
<feature type="helix" evidence="16">
    <location>
        <begin position="331"/>
        <end position="333"/>
    </location>
</feature>
<feature type="helix" evidence="15">
    <location>
        <begin position="343"/>
        <end position="345"/>
    </location>
</feature>
<feature type="helix" evidence="15">
    <location>
        <begin position="349"/>
        <end position="351"/>
    </location>
</feature>
<feature type="helix" evidence="15">
    <location>
        <begin position="353"/>
        <end position="366"/>
    </location>
</feature>
<feature type="helix" evidence="15">
    <location>
        <begin position="372"/>
        <end position="376"/>
    </location>
</feature>
<feature type="strand" evidence="15">
    <location>
        <begin position="384"/>
        <end position="389"/>
    </location>
</feature>
<feature type="helix" evidence="15">
    <location>
        <begin position="393"/>
        <end position="402"/>
    </location>
</feature>
<feature type="strand" evidence="15">
    <location>
        <begin position="421"/>
        <end position="426"/>
    </location>
</feature>
<feature type="strand" evidence="15">
    <location>
        <begin position="429"/>
        <end position="434"/>
    </location>
</feature>
<sequence length="447" mass="51540">MLKKQSAGLVLWGAILFVAWNALLLLFFWTRPVPSRLPSDNALDDDPASLTREVIRLAQDAEVELERQRGLLQQIREHHALWSQRWKVPTAAPPAQPHVPVTPPPAVIPILVIACDRSTVRRCLDKLLHYRPSAELFPIIVSQDCGHEETAQVIASYGSAVTHIRQPDLSNIAVQPDHRKFQGYYKIARHYRWALGQIFHNFNYPAAVVVEDDLEVAPDFFEYFQATYPLLKADPSLWCVSAWNDNGKEQMVDSSKPELLYRTDFFPGLGWLLLAELWAELEPKWPKAFWDDWMRRPEQRKGRACVRPEISRTMTFGRKGVSHGQFFDQHLKFIKLNQQFVPFTQLDLSYLQQEAYDRDFLARVYGAPQLQVEKVRTNDRKELGEVRVQYTGRDSFKAFAKALGVMDDLKSGVPRAGYRGIVTFLFRGRRVHLAPPQTWDGYDPSWT</sequence>
<keyword id="KW-0002">3D-structure</keyword>
<keyword id="KW-0963">Cytoplasm</keyword>
<keyword id="KW-0903">Direct protein sequencing</keyword>
<keyword id="KW-1015">Disulfide bond</keyword>
<keyword id="KW-0328">Glycosyltransferase</keyword>
<keyword id="KW-0333">Golgi apparatus</keyword>
<keyword id="KW-0464">Manganese</keyword>
<keyword id="KW-0472">Membrane</keyword>
<keyword id="KW-0479">Metal-binding</keyword>
<keyword id="KW-1185">Reference proteome</keyword>
<keyword id="KW-0735">Signal-anchor</keyword>
<keyword id="KW-0808">Transferase</keyword>
<keyword id="KW-0812">Transmembrane</keyword>
<keyword id="KW-1133">Transmembrane helix</keyword>